<sequence length="176" mass="18980">MAASTDIAGLEESFRKFAIHGDPKASGQEMNGKNWAKLCKDCKVADGKAVTGTDVDIVFSKVKAKSARVINYEEFKKALEELATKRFKGKTKEEAFDAICQLIAGKEPANIGVTKAKTGGAVDRLTDTSKYTGSHKERFDESGKGKGIAGRQDILDDSGYVSAYKNAGTYDAKVKK</sequence>
<organism>
    <name type="scientific">Rattus norvegicus</name>
    <name type="common">Rat</name>
    <dbReference type="NCBI Taxonomy" id="10116"/>
    <lineage>
        <taxon>Eukaryota</taxon>
        <taxon>Metazoa</taxon>
        <taxon>Chordata</taxon>
        <taxon>Craniata</taxon>
        <taxon>Vertebrata</taxon>
        <taxon>Euteleostomi</taxon>
        <taxon>Mammalia</taxon>
        <taxon>Eutheria</taxon>
        <taxon>Euarchontoglires</taxon>
        <taxon>Glires</taxon>
        <taxon>Rodentia</taxon>
        <taxon>Myomorpha</taxon>
        <taxon>Muroidea</taxon>
        <taxon>Muridae</taxon>
        <taxon>Murinae</taxon>
        <taxon>Rattus</taxon>
    </lineage>
</organism>
<proteinExistence type="evidence at transcript level"/>
<protein>
    <recommendedName>
        <fullName>Tubulin polymerization-promoting protein family member 3</fullName>
    </recommendedName>
</protein>
<accession>Q5PPN5</accession>
<gene>
    <name type="primary">Tppp3</name>
</gene>
<feature type="initiator methionine" description="Removed" evidence="1">
    <location>
        <position position="1"/>
    </location>
</feature>
<feature type="chain" id="PRO_0000289006" description="Tubulin polymerization-promoting protein family member 3">
    <location>
        <begin position="2"/>
        <end position="176"/>
    </location>
</feature>
<feature type="modified residue" description="N-acetylalanine" evidence="1">
    <location>
        <position position="2"/>
    </location>
</feature>
<reference key="1">
    <citation type="journal article" date="2004" name="Genome Res.">
        <title>The status, quality, and expansion of the NIH full-length cDNA project: the Mammalian Gene Collection (MGC).</title>
        <authorList>
            <consortium name="The MGC Project Team"/>
        </authorList>
    </citation>
    <scope>NUCLEOTIDE SEQUENCE [LARGE SCALE MRNA]</scope>
    <source>
        <tissue>Brain</tissue>
    </source>
</reference>
<comment type="function">
    <text evidence="1 2">Regulator of microtubule dynamic that has microtubule bundling activity (By similarity). Required for embryo implantation; possibly by regulating beta-catenin (By similarity). Also required for decidualization via regulation of beta-catenin (By similarity).</text>
</comment>
<comment type="subcellular location">
    <subcellularLocation>
        <location evidence="1">Cytoplasm</location>
    </subcellularLocation>
    <subcellularLocation>
        <location evidence="1">Cytoplasm</location>
        <location evidence="1">Cytoskeleton</location>
    </subcellularLocation>
</comment>
<comment type="similarity">
    <text evidence="3">Belongs to the TPPP family.</text>
</comment>
<name>TPPP3_RAT</name>
<dbReference type="EMBL" id="BC087585">
    <property type="protein sequence ID" value="AAH87585.1"/>
    <property type="molecule type" value="mRNA"/>
</dbReference>
<dbReference type="RefSeq" id="NP_001009639.1">
    <property type="nucleotide sequence ID" value="NM_001009639.1"/>
</dbReference>
<dbReference type="RefSeq" id="XP_006255526.1">
    <property type="nucleotide sequence ID" value="XM_006255464.5"/>
</dbReference>
<dbReference type="BMRB" id="Q5PPN5"/>
<dbReference type="SMR" id="Q5PPN5"/>
<dbReference type="BioGRID" id="253713">
    <property type="interactions" value="1"/>
</dbReference>
<dbReference type="FunCoup" id="Q5PPN5">
    <property type="interactions" value="284"/>
</dbReference>
<dbReference type="STRING" id="10116.ENSRNOP00000022863"/>
<dbReference type="iPTMnet" id="Q5PPN5"/>
<dbReference type="PhosphoSitePlus" id="Q5PPN5"/>
<dbReference type="PaxDb" id="10116-ENSRNOP00000022863"/>
<dbReference type="Ensembl" id="ENSRNOT00000022863.8">
    <property type="protein sequence ID" value="ENSRNOP00000022863.4"/>
    <property type="gene ID" value="ENSRNOG00000016890.8"/>
</dbReference>
<dbReference type="GeneID" id="291966"/>
<dbReference type="KEGG" id="rno:291966"/>
<dbReference type="UCSC" id="RGD:1305061">
    <property type="organism name" value="rat"/>
</dbReference>
<dbReference type="AGR" id="RGD:1305061"/>
<dbReference type="CTD" id="51673"/>
<dbReference type="RGD" id="1305061">
    <property type="gene designation" value="Tppp3"/>
</dbReference>
<dbReference type="eggNOG" id="KOG4070">
    <property type="taxonomic scope" value="Eukaryota"/>
</dbReference>
<dbReference type="GeneTree" id="ENSGT00940000153875"/>
<dbReference type="HOGENOM" id="CLU_091734_0_0_1"/>
<dbReference type="InParanoid" id="Q5PPN5"/>
<dbReference type="OMA" id="EAFNSIC"/>
<dbReference type="OrthoDB" id="548799at2759"/>
<dbReference type="PhylomeDB" id="Q5PPN5"/>
<dbReference type="TreeFam" id="TF314440"/>
<dbReference type="PRO" id="PR:Q5PPN5"/>
<dbReference type="Proteomes" id="UP000002494">
    <property type="component" value="Chromosome 19"/>
</dbReference>
<dbReference type="Bgee" id="ENSRNOG00000016890">
    <property type="expression patterns" value="Expressed in lung and 20 other cell types or tissues"/>
</dbReference>
<dbReference type="GO" id="GO:0005874">
    <property type="term" value="C:microtubule"/>
    <property type="evidence" value="ECO:0007669"/>
    <property type="project" value="UniProtKB-KW"/>
</dbReference>
<dbReference type="GO" id="GO:0097427">
    <property type="term" value="C:microtubule bundle"/>
    <property type="evidence" value="ECO:0000266"/>
    <property type="project" value="RGD"/>
</dbReference>
<dbReference type="GO" id="GO:0048471">
    <property type="term" value="C:perinuclear region of cytoplasm"/>
    <property type="evidence" value="ECO:0000266"/>
    <property type="project" value="RGD"/>
</dbReference>
<dbReference type="GO" id="GO:0015631">
    <property type="term" value="F:tubulin binding"/>
    <property type="evidence" value="ECO:0000250"/>
    <property type="project" value="UniProtKB"/>
</dbReference>
<dbReference type="GO" id="GO:0046697">
    <property type="term" value="P:decidualization"/>
    <property type="evidence" value="ECO:0000250"/>
    <property type="project" value="UniProtKB"/>
</dbReference>
<dbReference type="GO" id="GO:0007566">
    <property type="term" value="P:embryo implantation"/>
    <property type="evidence" value="ECO:0000250"/>
    <property type="project" value="UniProtKB"/>
</dbReference>
<dbReference type="GO" id="GO:0001578">
    <property type="term" value="P:microtubule bundle formation"/>
    <property type="evidence" value="ECO:0000250"/>
    <property type="project" value="UniProtKB"/>
</dbReference>
<dbReference type="GO" id="GO:0046785">
    <property type="term" value="P:microtubule polymerization"/>
    <property type="evidence" value="ECO:0000318"/>
    <property type="project" value="GO_Central"/>
</dbReference>
<dbReference type="GO" id="GO:0032273">
    <property type="term" value="P:positive regulation of protein polymerization"/>
    <property type="evidence" value="ECO:0000318"/>
    <property type="project" value="GO_Central"/>
</dbReference>
<dbReference type="FunFam" id="1.10.238.10:FF:000057">
    <property type="entry name" value="Tubulin polymerization-promoting protein family member 3"/>
    <property type="match status" value="1"/>
</dbReference>
<dbReference type="Gene3D" id="1.10.238.10">
    <property type="entry name" value="EF-hand"/>
    <property type="match status" value="1"/>
</dbReference>
<dbReference type="InterPro" id="IPR011992">
    <property type="entry name" value="EF-hand-dom_pair"/>
</dbReference>
<dbReference type="InterPro" id="IPR008907">
    <property type="entry name" value="TPP/p25"/>
</dbReference>
<dbReference type="PANTHER" id="PTHR12932">
    <property type="entry name" value="P25 ALPHA-RELATED"/>
    <property type="match status" value="1"/>
</dbReference>
<dbReference type="PANTHER" id="PTHR12932:SF16">
    <property type="entry name" value="TUBULIN POLYMERIZATION-PROMOTING PROTEIN FAMILY MEMBER 3"/>
    <property type="match status" value="1"/>
</dbReference>
<dbReference type="Pfam" id="PF05517">
    <property type="entry name" value="p25-alpha"/>
    <property type="match status" value="1"/>
</dbReference>
<dbReference type="SUPFAM" id="SSF47473">
    <property type="entry name" value="EF-hand"/>
    <property type="match status" value="1"/>
</dbReference>
<keyword id="KW-0007">Acetylation</keyword>
<keyword id="KW-0963">Cytoplasm</keyword>
<keyword id="KW-0206">Cytoskeleton</keyword>
<keyword id="KW-0493">Microtubule</keyword>
<keyword id="KW-1185">Reference proteome</keyword>
<evidence type="ECO:0000250" key="1">
    <source>
        <dbReference type="UniProtKB" id="Q9BW30"/>
    </source>
</evidence>
<evidence type="ECO:0000250" key="2">
    <source>
        <dbReference type="UniProtKB" id="Q9CRB6"/>
    </source>
</evidence>
<evidence type="ECO:0000305" key="3"/>